<accession>Q9BPY3</accession>
<accession>Q9H7B0</accession>
<organism>
    <name type="scientific">Homo sapiens</name>
    <name type="common">Human</name>
    <dbReference type="NCBI Taxonomy" id="9606"/>
    <lineage>
        <taxon>Eukaryota</taxon>
        <taxon>Metazoa</taxon>
        <taxon>Chordata</taxon>
        <taxon>Craniata</taxon>
        <taxon>Vertebrata</taxon>
        <taxon>Euteleostomi</taxon>
        <taxon>Mammalia</taxon>
        <taxon>Eutheria</taxon>
        <taxon>Euarchontoglires</taxon>
        <taxon>Primates</taxon>
        <taxon>Haplorrhini</taxon>
        <taxon>Catarrhini</taxon>
        <taxon>Hominidae</taxon>
        <taxon>Homo</taxon>
    </lineage>
</organism>
<protein>
    <recommendedName>
        <fullName>Protein FAM118B</fullName>
    </recommendedName>
</protein>
<reference key="1">
    <citation type="journal article" date="2004" name="Nat. Genet.">
        <title>Complete sequencing and characterization of 21,243 full-length human cDNAs.</title>
        <authorList>
            <person name="Ota T."/>
            <person name="Suzuki Y."/>
            <person name="Nishikawa T."/>
            <person name="Otsuki T."/>
            <person name="Sugiyama T."/>
            <person name="Irie R."/>
            <person name="Wakamatsu A."/>
            <person name="Hayashi K."/>
            <person name="Sato H."/>
            <person name="Nagai K."/>
            <person name="Kimura K."/>
            <person name="Makita H."/>
            <person name="Sekine M."/>
            <person name="Obayashi M."/>
            <person name="Nishi T."/>
            <person name="Shibahara T."/>
            <person name="Tanaka T."/>
            <person name="Ishii S."/>
            <person name="Yamamoto J."/>
            <person name="Saito K."/>
            <person name="Kawai Y."/>
            <person name="Isono Y."/>
            <person name="Nakamura Y."/>
            <person name="Nagahari K."/>
            <person name="Murakami K."/>
            <person name="Yasuda T."/>
            <person name="Iwayanagi T."/>
            <person name="Wagatsuma M."/>
            <person name="Shiratori A."/>
            <person name="Sudo H."/>
            <person name="Hosoiri T."/>
            <person name="Kaku Y."/>
            <person name="Kodaira H."/>
            <person name="Kondo H."/>
            <person name="Sugawara M."/>
            <person name="Takahashi M."/>
            <person name="Kanda K."/>
            <person name="Yokoi T."/>
            <person name="Furuya T."/>
            <person name="Kikkawa E."/>
            <person name="Omura Y."/>
            <person name="Abe K."/>
            <person name="Kamihara K."/>
            <person name="Katsuta N."/>
            <person name="Sato K."/>
            <person name="Tanikawa M."/>
            <person name="Yamazaki M."/>
            <person name="Ninomiya K."/>
            <person name="Ishibashi T."/>
            <person name="Yamashita H."/>
            <person name="Murakawa K."/>
            <person name="Fujimori K."/>
            <person name="Tanai H."/>
            <person name="Kimata M."/>
            <person name="Watanabe M."/>
            <person name="Hiraoka S."/>
            <person name="Chiba Y."/>
            <person name="Ishida S."/>
            <person name="Ono Y."/>
            <person name="Takiguchi S."/>
            <person name="Watanabe S."/>
            <person name="Yosida M."/>
            <person name="Hotuta T."/>
            <person name="Kusano J."/>
            <person name="Kanehori K."/>
            <person name="Takahashi-Fujii A."/>
            <person name="Hara H."/>
            <person name="Tanase T.-O."/>
            <person name="Nomura Y."/>
            <person name="Togiya S."/>
            <person name="Komai F."/>
            <person name="Hara R."/>
            <person name="Takeuchi K."/>
            <person name="Arita M."/>
            <person name="Imose N."/>
            <person name="Musashino K."/>
            <person name="Yuuki H."/>
            <person name="Oshima A."/>
            <person name="Sasaki N."/>
            <person name="Aotsuka S."/>
            <person name="Yoshikawa Y."/>
            <person name="Matsunawa H."/>
            <person name="Ichihara T."/>
            <person name="Shiohata N."/>
            <person name="Sano S."/>
            <person name="Moriya S."/>
            <person name="Momiyama H."/>
            <person name="Satoh N."/>
            <person name="Takami S."/>
            <person name="Terashima Y."/>
            <person name="Suzuki O."/>
            <person name="Nakagawa S."/>
            <person name="Senoh A."/>
            <person name="Mizoguchi H."/>
            <person name="Goto Y."/>
            <person name="Shimizu F."/>
            <person name="Wakebe H."/>
            <person name="Hishigaki H."/>
            <person name="Watanabe T."/>
            <person name="Sugiyama A."/>
            <person name="Takemoto M."/>
            <person name="Kawakami B."/>
            <person name="Yamazaki M."/>
            <person name="Watanabe K."/>
            <person name="Kumagai A."/>
            <person name="Itakura S."/>
            <person name="Fukuzumi Y."/>
            <person name="Fujimori Y."/>
            <person name="Komiyama M."/>
            <person name="Tashiro H."/>
            <person name="Tanigami A."/>
            <person name="Fujiwara T."/>
            <person name="Ono T."/>
            <person name="Yamada K."/>
            <person name="Fujii Y."/>
            <person name="Ozaki K."/>
            <person name="Hirao M."/>
            <person name="Ohmori Y."/>
            <person name="Kawabata A."/>
            <person name="Hikiji T."/>
            <person name="Kobatake N."/>
            <person name="Inagaki H."/>
            <person name="Ikema Y."/>
            <person name="Okamoto S."/>
            <person name="Okitani R."/>
            <person name="Kawakami T."/>
            <person name="Noguchi S."/>
            <person name="Itoh T."/>
            <person name="Shigeta K."/>
            <person name="Senba T."/>
            <person name="Matsumura K."/>
            <person name="Nakajima Y."/>
            <person name="Mizuno T."/>
            <person name="Morinaga M."/>
            <person name="Sasaki M."/>
            <person name="Togashi T."/>
            <person name="Oyama M."/>
            <person name="Hata H."/>
            <person name="Watanabe M."/>
            <person name="Komatsu T."/>
            <person name="Mizushima-Sugano J."/>
            <person name="Satoh T."/>
            <person name="Shirai Y."/>
            <person name="Takahashi Y."/>
            <person name="Nakagawa K."/>
            <person name="Okumura K."/>
            <person name="Nagase T."/>
            <person name="Nomura N."/>
            <person name="Kikuchi H."/>
            <person name="Masuho Y."/>
            <person name="Yamashita R."/>
            <person name="Nakai K."/>
            <person name="Yada T."/>
            <person name="Nakamura Y."/>
            <person name="Ohara O."/>
            <person name="Isogai T."/>
            <person name="Sugano S."/>
        </authorList>
    </citation>
    <scope>NUCLEOTIDE SEQUENCE [LARGE SCALE MRNA]</scope>
</reference>
<reference key="2">
    <citation type="submission" date="2004-06" db="EMBL/GenBank/DDBJ databases">
        <title>Cloning of human full open reading frames in Gateway(TM) system entry vector (pDONR201).</title>
        <authorList>
            <person name="Ebert L."/>
            <person name="Schick M."/>
            <person name="Neubert P."/>
            <person name="Schatten R."/>
            <person name="Henze S."/>
            <person name="Korn B."/>
        </authorList>
    </citation>
    <scope>NUCLEOTIDE SEQUENCE [LARGE SCALE MRNA]</scope>
</reference>
<reference key="3">
    <citation type="journal article" date="2004" name="Genome Res.">
        <title>The status, quality, and expansion of the NIH full-length cDNA project: the Mammalian Gene Collection (MGC).</title>
        <authorList>
            <consortium name="The MGC Project Team"/>
        </authorList>
    </citation>
    <scope>NUCLEOTIDE SEQUENCE [LARGE SCALE MRNA]</scope>
    <source>
        <tissue>Cervix</tissue>
        <tissue>Lung</tissue>
    </source>
</reference>
<reference key="4">
    <citation type="journal article" date="2010" name="Sci. Signal.">
        <title>Quantitative phosphoproteomics reveals widespread full phosphorylation site occupancy during mitosis.</title>
        <authorList>
            <person name="Olsen J.V."/>
            <person name="Vermeulen M."/>
            <person name="Santamaria A."/>
            <person name="Kumar C."/>
            <person name="Miller M.L."/>
            <person name="Jensen L.J."/>
            <person name="Gnad F."/>
            <person name="Cox J."/>
            <person name="Jensen T.S."/>
            <person name="Nigg E.A."/>
            <person name="Brunak S."/>
            <person name="Mann M."/>
        </authorList>
    </citation>
    <scope>ACETYLATION [LARGE SCALE ANALYSIS] AT ALA-2</scope>
    <scope>PHOSPHORYLATION [LARGE SCALE ANALYSIS] AT SER-9</scope>
    <scope>CLEAVAGE OF INITIATOR METHIONINE [LARGE SCALE ANALYSIS]</scope>
    <scope>IDENTIFICATION BY MASS SPECTROMETRY [LARGE SCALE ANALYSIS]</scope>
    <source>
        <tissue>Cervix carcinoma</tissue>
    </source>
</reference>
<reference key="5">
    <citation type="journal article" date="2011" name="BMC Syst. Biol.">
        <title>Initial characterization of the human central proteome.</title>
        <authorList>
            <person name="Burkard T.R."/>
            <person name="Planyavsky M."/>
            <person name="Kaupe I."/>
            <person name="Breitwieser F.P."/>
            <person name="Buerckstuemmer T."/>
            <person name="Bennett K.L."/>
            <person name="Superti-Furga G."/>
            <person name="Colinge J."/>
        </authorList>
    </citation>
    <scope>IDENTIFICATION BY MASS SPECTROMETRY [LARGE SCALE ANALYSIS]</scope>
</reference>
<reference key="6">
    <citation type="journal article" date="2011" name="Sci. Signal.">
        <title>System-wide temporal characterization of the proteome and phosphoproteome of human embryonic stem cell differentiation.</title>
        <authorList>
            <person name="Rigbolt K.T."/>
            <person name="Prokhorova T.A."/>
            <person name="Akimov V."/>
            <person name="Henningsen J."/>
            <person name="Johansen P.T."/>
            <person name="Kratchmarova I."/>
            <person name="Kassem M."/>
            <person name="Mann M."/>
            <person name="Olsen J.V."/>
            <person name="Blagoev B."/>
        </authorList>
    </citation>
    <scope>ACETYLATION [LARGE SCALE ANALYSIS] AT ALA-2</scope>
    <scope>CLEAVAGE OF INITIATOR METHIONINE [LARGE SCALE ANALYSIS]</scope>
    <scope>IDENTIFICATION BY MASS SPECTROMETRY [LARGE SCALE ANALYSIS]</scope>
</reference>
<reference key="7">
    <citation type="journal article" date="2013" name="J. Proteome Res.">
        <title>Toward a comprehensive characterization of a human cancer cell phosphoproteome.</title>
        <authorList>
            <person name="Zhou H."/>
            <person name="Di Palma S."/>
            <person name="Preisinger C."/>
            <person name="Peng M."/>
            <person name="Polat A.N."/>
            <person name="Heck A.J."/>
            <person name="Mohammed S."/>
        </authorList>
    </citation>
    <scope>IDENTIFICATION BY MASS SPECTROMETRY [LARGE SCALE ANALYSIS]</scope>
    <source>
        <tissue>Erythroleukemia</tissue>
    </source>
</reference>
<reference key="8">
    <citation type="journal article" date="2014" name="J. Cell Sci.">
        <title>Fam118B, a newly identified component of Cajal bodies, is required for Cajal body formation, snRNP biogenesis and cell viability.</title>
        <authorList>
            <person name="Li Y."/>
            <person name="Fong K.W."/>
            <person name="Tang M."/>
            <person name="Han X."/>
            <person name="Gong Z."/>
            <person name="Ma W."/>
            <person name="Hebert M."/>
            <person name="Songyang Z."/>
            <person name="Chen J."/>
        </authorList>
    </citation>
    <scope>FUNCTION</scope>
    <scope>SUBCELLULAR LOCATION</scope>
</reference>
<evidence type="ECO:0000269" key="1">
    <source>
    </source>
</evidence>
<evidence type="ECO:0000305" key="2"/>
<evidence type="ECO:0007744" key="3">
    <source>
    </source>
</evidence>
<evidence type="ECO:0007744" key="4">
    <source>
    </source>
</evidence>
<gene>
    <name type="primary">FAM118B</name>
</gene>
<comment type="function">
    <text evidence="1">May play a role in Cajal bodies formation.</text>
</comment>
<comment type="interaction">
    <interactant intactId="EBI-726822">
        <id>Q9BPY3</id>
    </interactant>
    <interactant intactId="EBI-356517">
        <id>Q9UL15</id>
        <label>BAG5</label>
    </interactant>
    <organismsDiffer>false</organismsDiffer>
    <experiments>3</experiments>
</comment>
<comment type="interaction">
    <interactant intactId="EBI-726822">
        <id>Q9BPY3</id>
    </interactant>
    <interactant intactId="EBI-8638992">
        <id>Q9NWS6</id>
        <label>FAM118A</label>
    </interactant>
    <organismsDiffer>false</organismsDiffer>
    <experiments>6</experiments>
</comment>
<comment type="interaction">
    <interactant intactId="EBI-726822">
        <id>Q9BPY3</id>
    </interactant>
    <interactant intactId="EBI-726822">
        <id>Q9BPY3</id>
        <label>FAM118B</label>
    </interactant>
    <organismsDiffer>false</organismsDiffer>
    <experiments>3</experiments>
</comment>
<comment type="interaction">
    <interactant intactId="EBI-726822">
        <id>Q9BPY3</id>
    </interactant>
    <interactant intactId="EBI-740195">
        <id>Q9BUL8</id>
        <label>PDCD10</label>
    </interactant>
    <organismsDiffer>false</organismsDiffer>
    <experiments>3</experiments>
</comment>
<comment type="interaction">
    <interactant intactId="EBI-726822">
        <id>Q9BPY3</id>
    </interactant>
    <interactant intactId="EBI-348567">
        <id>O75928-2</id>
        <label>PIAS2</label>
    </interactant>
    <organismsDiffer>false</organismsDiffer>
    <experiments>3</experiments>
</comment>
<comment type="interaction">
    <interactant intactId="EBI-726822">
        <id>Q9BPY3</id>
    </interactant>
    <interactant intactId="EBI-948156">
        <id>Q9Y4B4</id>
        <label>RAD54L2</label>
    </interactant>
    <organismsDiffer>false</organismsDiffer>
    <experiments>3</experiments>
</comment>
<comment type="interaction">
    <interactant intactId="EBI-726822">
        <id>Q9BPY3</id>
    </interactant>
    <interactant intactId="EBI-373337">
        <id>O76064</id>
        <label>RNF8</label>
    </interactant>
    <organismsDiffer>false</organismsDiffer>
    <experiments>3</experiments>
</comment>
<comment type="interaction">
    <interactant intactId="EBI-726822">
        <id>Q9BPY3</id>
    </interactant>
    <interactant intactId="EBI-727004">
        <id>O00560</id>
        <label>SDCBP</label>
    </interactant>
    <organismsDiffer>false</organismsDiffer>
    <experiments>3</experiments>
</comment>
<comment type="interaction">
    <interactant intactId="EBI-726822">
        <id>Q9BPY3</id>
    </interactant>
    <interactant intactId="EBI-80140">
        <id>P63165</id>
        <label>SUMO1</label>
    </interactant>
    <organismsDiffer>false</organismsDiffer>
    <experiments>3</experiments>
</comment>
<comment type="interaction">
    <interactant intactId="EBI-726822">
        <id>Q9BPY3</id>
    </interactant>
    <interactant intactId="EBI-10175576">
        <id>G2XKQ0</id>
        <label>SUMO1P1</label>
    </interactant>
    <organismsDiffer>false</organismsDiffer>
    <experiments>3</experiments>
</comment>
<comment type="subcellular location">
    <subcellularLocation>
        <location evidence="1">Nucleus</location>
        <location evidence="1">Cajal body</location>
    </subcellularLocation>
</comment>
<comment type="miscellaneous">
    <text evidence="1">Overexpression changes the morphology of Cajal bodies, while depletion disrupts the localization of components of Cajal bodies, reduces splicing capacity and inhibits cell proliferation.</text>
</comment>
<comment type="similarity">
    <text evidence="2">Belongs to the FAM118 family.</text>
</comment>
<proteinExistence type="evidence at protein level"/>
<name>F118B_HUMAN</name>
<keyword id="KW-0007">Acetylation</keyword>
<keyword id="KW-0539">Nucleus</keyword>
<keyword id="KW-0597">Phosphoprotein</keyword>
<keyword id="KW-1267">Proteomics identification</keyword>
<keyword id="KW-1185">Reference proteome</keyword>
<sequence>MASTGSQASDIDEIFGFFNDGEPPTKKPRKLLPSLKTKKPRELVLVIGTGISAAVAPQVPALKSWKGLIQALLDAAIDFDLLEDEESKKFQKCLHEDKNLVHVAHDLIQKLSPRTSNVRSTFFKDCLYEVFDDLESKMEDSGKQLLQSVLHLMENGALVLTTNFDNLLELYAADQGKQLESLDLTDEKKVLEWAQEKRKLSVLHIHGVYTNPSGIVLHPAGYQNVLRNTEVMREIQKLYENKSFLFLGCGWTVDDTTFQALFLEAVKHKSDLEHFMLVRRGDVDEFKKLRENMLDKGIKVISYGDDYADLPEYFKRLTCEISTRGTSAGMVREGQLNGSSAAHSEIRGCST</sequence>
<feature type="initiator methionine" description="Removed" evidence="3 4">
    <location>
        <position position="1"/>
    </location>
</feature>
<feature type="chain" id="PRO_0000295103" description="Protein FAM118B">
    <location>
        <begin position="2"/>
        <end position="351"/>
    </location>
</feature>
<feature type="modified residue" description="N-acetylalanine" evidence="3 4">
    <location>
        <position position="2"/>
    </location>
</feature>
<feature type="modified residue" description="Phosphoserine" evidence="3">
    <location>
        <position position="9"/>
    </location>
</feature>
<feature type="sequence conflict" description="In Ref. 1; BAB14987." evidence="2" ref="1">
    <original>D</original>
    <variation>G</variation>
    <location>
        <position position="133"/>
    </location>
</feature>
<dbReference type="EMBL" id="AK024756">
    <property type="protein sequence ID" value="BAB14987.1"/>
    <property type="molecule type" value="mRNA"/>
</dbReference>
<dbReference type="EMBL" id="CR457334">
    <property type="protein sequence ID" value="CAG33615.1"/>
    <property type="molecule type" value="mRNA"/>
</dbReference>
<dbReference type="EMBL" id="BC001340">
    <property type="protein sequence ID" value="AAH01340.1"/>
    <property type="molecule type" value="mRNA"/>
</dbReference>
<dbReference type="EMBL" id="BC001647">
    <property type="protein sequence ID" value="AAH01647.1"/>
    <property type="molecule type" value="mRNA"/>
</dbReference>
<dbReference type="CCDS" id="CCDS8470.1"/>
<dbReference type="RefSeq" id="NP_078832.1">
    <property type="nucleotide sequence ID" value="NM_024556.4"/>
</dbReference>
<dbReference type="RefSeq" id="XP_011541279.1">
    <property type="nucleotide sequence ID" value="XM_011542977.4"/>
</dbReference>
<dbReference type="RefSeq" id="XP_054225905.1">
    <property type="nucleotide sequence ID" value="XM_054369930.1"/>
</dbReference>
<dbReference type="SMR" id="Q9BPY3"/>
<dbReference type="BioGRID" id="122742">
    <property type="interactions" value="81"/>
</dbReference>
<dbReference type="FunCoup" id="Q9BPY3">
    <property type="interactions" value="774"/>
</dbReference>
<dbReference type="IntAct" id="Q9BPY3">
    <property type="interactions" value="71"/>
</dbReference>
<dbReference type="MINT" id="Q9BPY3"/>
<dbReference type="STRING" id="9606.ENSP00000433343"/>
<dbReference type="GlyGen" id="Q9BPY3">
    <property type="glycosylation" value="1 site, 1 O-linked glycan (1 site)"/>
</dbReference>
<dbReference type="iPTMnet" id="Q9BPY3"/>
<dbReference type="PhosphoSitePlus" id="Q9BPY3"/>
<dbReference type="BioMuta" id="FAM118B"/>
<dbReference type="DMDM" id="74732801"/>
<dbReference type="jPOST" id="Q9BPY3"/>
<dbReference type="MassIVE" id="Q9BPY3"/>
<dbReference type="PaxDb" id="9606-ENSP00000433343"/>
<dbReference type="PeptideAtlas" id="Q9BPY3"/>
<dbReference type="ProteomicsDB" id="78594"/>
<dbReference type="Pumba" id="Q9BPY3"/>
<dbReference type="Antibodypedia" id="46048">
    <property type="antibodies" value="149 antibodies from 22 providers"/>
</dbReference>
<dbReference type="DNASU" id="79607"/>
<dbReference type="Ensembl" id="ENST00000533050.6">
    <property type="protein sequence ID" value="ENSP00000433343.1"/>
    <property type="gene ID" value="ENSG00000197798.9"/>
</dbReference>
<dbReference type="GeneID" id="79607"/>
<dbReference type="KEGG" id="hsa:79607"/>
<dbReference type="MANE-Select" id="ENST00000533050.6">
    <property type="protein sequence ID" value="ENSP00000433343.1"/>
    <property type="RefSeq nucleotide sequence ID" value="NM_024556.4"/>
    <property type="RefSeq protein sequence ID" value="NP_078832.1"/>
</dbReference>
<dbReference type="UCSC" id="uc001qdf.4">
    <property type="organism name" value="human"/>
</dbReference>
<dbReference type="AGR" id="HGNC:26110"/>
<dbReference type="CTD" id="79607"/>
<dbReference type="DisGeNET" id="79607"/>
<dbReference type="GeneCards" id="FAM118B"/>
<dbReference type="HGNC" id="HGNC:26110">
    <property type="gene designation" value="FAM118B"/>
</dbReference>
<dbReference type="HPA" id="ENSG00000197798">
    <property type="expression patterns" value="Low tissue specificity"/>
</dbReference>
<dbReference type="MIM" id="616587">
    <property type="type" value="gene"/>
</dbReference>
<dbReference type="neXtProt" id="NX_Q9BPY3"/>
<dbReference type="OpenTargets" id="ENSG00000197798"/>
<dbReference type="PharmGKB" id="PA145008413"/>
<dbReference type="VEuPathDB" id="HostDB:ENSG00000197798"/>
<dbReference type="eggNOG" id="ENOG502QSNY">
    <property type="taxonomic scope" value="Eukaryota"/>
</dbReference>
<dbReference type="GeneTree" id="ENSGT00390000010215"/>
<dbReference type="InParanoid" id="Q9BPY3"/>
<dbReference type="OMA" id="WGKQNEL"/>
<dbReference type="OrthoDB" id="9940519at2759"/>
<dbReference type="PAN-GO" id="Q9BPY3">
    <property type="GO annotations" value="0 GO annotations based on evolutionary models"/>
</dbReference>
<dbReference type="PhylomeDB" id="Q9BPY3"/>
<dbReference type="TreeFam" id="TF332439"/>
<dbReference type="PathwayCommons" id="Q9BPY3"/>
<dbReference type="SignaLink" id="Q9BPY3"/>
<dbReference type="BioGRID-ORCS" id="79607">
    <property type="hits" value="7 hits in 1154 CRISPR screens"/>
</dbReference>
<dbReference type="CD-CODE" id="6F24707C">
    <property type="entry name" value="Cajal body"/>
</dbReference>
<dbReference type="ChiTaRS" id="FAM118B">
    <property type="organism name" value="human"/>
</dbReference>
<dbReference type="GenomeRNAi" id="79607"/>
<dbReference type="Pharos" id="Q9BPY3">
    <property type="development level" value="Tdark"/>
</dbReference>
<dbReference type="PRO" id="PR:Q9BPY3"/>
<dbReference type="Proteomes" id="UP000005640">
    <property type="component" value="Chromosome 11"/>
</dbReference>
<dbReference type="RNAct" id="Q9BPY3">
    <property type="molecule type" value="protein"/>
</dbReference>
<dbReference type="Bgee" id="ENSG00000197798">
    <property type="expression patterns" value="Expressed in oocyte and 174 other cell types or tissues"/>
</dbReference>
<dbReference type="ExpressionAtlas" id="Q9BPY3">
    <property type="expression patterns" value="baseline and differential"/>
</dbReference>
<dbReference type="GO" id="GO:0015030">
    <property type="term" value="C:Cajal body"/>
    <property type="evidence" value="ECO:0007669"/>
    <property type="project" value="UniProtKB-SubCell"/>
</dbReference>
<dbReference type="GO" id="GO:0042802">
    <property type="term" value="F:identical protein binding"/>
    <property type="evidence" value="ECO:0000353"/>
    <property type="project" value="IntAct"/>
</dbReference>
<dbReference type="InterPro" id="IPR038916">
    <property type="entry name" value="FAM118"/>
</dbReference>
<dbReference type="PANTHER" id="PTHR28623">
    <property type="entry name" value="PROTEIN FAM118B"/>
    <property type="match status" value="1"/>
</dbReference>
<dbReference type="PANTHER" id="PTHR28623:SF1">
    <property type="entry name" value="PROTEIN FAM118B"/>
    <property type="match status" value="1"/>
</dbReference>
<dbReference type="Pfam" id="PF13289">
    <property type="entry name" value="SIR2_2"/>
    <property type="match status" value="1"/>
</dbReference>